<name>RL18_CELJU</name>
<dbReference type="EMBL" id="CP000934">
    <property type="protein sequence ID" value="ACE83599.1"/>
    <property type="molecule type" value="Genomic_DNA"/>
</dbReference>
<dbReference type="RefSeq" id="WP_012486378.1">
    <property type="nucleotide sequence ID" value="NC_010995.1"/>
</dbReference>
<dbReference type="SMR" id="B3PK53"/>
<dbReference type="STRING" id="498211.CJA_0715"/>
<dbReference type="KEGG" id="cja:CJA_0715"/>
<dbReference type="eggNOG" id="COG0256">
    <property type="taxonomic scope" value="Bacteria"/>
</dbReference>
<dbReference type="HOGENOM" id="CLU_098841_0_1_6"/>
<dbReference type="OrthoDB" id="9810939at2"/>
<dbReference type="Proteomes" id="UP000001036">
    <property type="component" value="Chromosome"/>
</dbReference>
<dbReference type="GO" id="GO:0022625">
    <property type="term" value="C:cytosolic large ribosomal subunit"/>
    <property type="evidence" value="ECO:0007669"/>
    <property type="project" value="TreeGrafter"/>
</dbReference>
<dbReference type="GO" id="GO:0008097">
    <property type="term" value="F:5S rRNA binding"/>
    <property type="evidence" value="ECO:0007669"/>
    <property type="project" value="TreeGrafter"/>
</dbReference>
<dbReference type="GO" id="GO:0003735">
    <property type="term" value="F:structural constituent of ribosome"/>
    <property type="evidence" value="ECO:0007669"/>
    <property type="project" value="InterPro"/>
</dbReference>
<dbReference type="GO" id="GO:0006412">
    <property type="term" value="P:translation"/>
    <property type="evidence" value="ECO:0007669"/>
    <property type="project" value="UniProtKB-UniRule"/>
</dbReference>
<dbReference type="CDD" id="cd00432">
    <property type="entry name" value="Ribosomal_L18_L5e"/>
    <property type="match status" value="1"/>
</dbReference>
<dbReference type="FunFam" id="3.30.420.100:FF:000001">
    <property type="entry name" value="50S ribosomal protein L18"/>
    <property type="match status" value="1"/>
</dbReference>
<dbReference type="Gene3D" id="3.30.420.100">
    <property type="match status" value="1"/>
</dbReference>
<dbReference type="HAMAP" id="MF_01337_B">
    <property type="entry name" value="Ribosomal_uL18_B"/>
    <property type="match status" value="1"/>
</dbReference>
<dbReference type="InterPro" id="IPR004389">
    <property type="entry name" value="Ribosomal_uL18_bac-type"/>
</dbReference>
<dbReference type="InterPro" id="IPR005484">
    <property type="entry name" value="Ribosomal_uL18_bac/euk"/>
</dbReference>
<dbReference type="NCBIfam" id="TIGR00060">
    <property type="entry name" value="L18_bact"/>
    <property type="match status" value="1"/>
</dbReference>
<dbReference type="PANTHER" id="PTHR12899">
    <property type="entry name" value="39S RIBOSOMAL PROTEIN L18, MITOCHONDRIAL"/>
    <property type="match status" value="1"/>
</dbReference>
<dbReference type="PANTHER" id="PTHR12899:SF3">
    <property type="entry name" value="LARGE RIBOSOMAL SUBUNIT PROTEIN UL18M"/>
    <property type="match status" value="1"/>
</dbReference>
<dbReference type="Pfam" id="PF00861">
    <property type="entry name" value="Ribosomal_L18p"/>
    <property type="match status" value="1"/>
</dbReference>
<dbReference type="SUPFAM" id="SSF53137">
    <property type="entry name" value="Translational machinery components"/>
    <property type="match status" value="1"/>
</dbReference>
<feature type="chain" id="PRO_1000142635" description="Large ribosomal subunit protein uL18">
    <location>
        <begin position="1"/>
        <end position="116"/>
    </location>
</feature>
<gene>
    <name evidence="1" type="primary">rplR</name>
    <name type="ordered locus">CJA_0715</name>
</gene>
<sequence length="116" mass="12471">MSEKKEARLRRARRARAKIRELGVTRLAIHRTPRHIYAQLISGDGSTVIASASTLDKDLRSGKTGNADAAKAVGALIAERAKAAGVTQVAFDRSGFKYHGRIKALADAAREGGLEF</sequence>
<comment type="function">
    <text evidence="1">This is one of the proteins that bind and probably mediate the attachment of the 5S RNA into the large ribosomal subunit, where it forms part of the central protuberance.</text>
</comment>
<comment type="subunit">
    <text evidence="1">Part of the 50S ribosomal subunit; part of the 5S rRNA/L5/L18/L25 subcomplex. Contacts the 5S and 23S rRNAs.</text>
</comment>
<comment type="similarity">
    <text evidence="1">Belongs to the universal ribosomal protein uL18 family.</text>
</comment>
<accession>B3PK53</accession>
<keyword id="KW-1185">Reference proteome</keyword>
<keyword id="KW-0687">Ribonucleoprotein</keyword>
<keyword id="KW-0689">Ribosomal protein</keyword>
<keyword id="KW-0694">RNA-binding</keyword>
<keyword id="KW-0699">rRNA-binding</keyword>
<evidence type="ECO:0000255" key="1">
    <source>
        <dbReference type="HAMAP-Rule" id="MF_01337"/>
    </source>
</evidence>
<evidence type="ECO:0000305" key="2"/>
<reference key="1">
    <citation type="journal article" date="2008" name="J. Bacteriol.">
        <title>Insights into plant cell wall degradation from the genome sequence of the soil bacterium Cellvibrio japonicus.</title>
        <authorList>
            <person name="DeBoy R.T."/>
            <person name="Mongodin E.F."/>
            <person name="Fouts D.E."/>
            <person name="Tailford L.E."/>
            <person name="Khouri H."/>
            <person name="Emerson J.B."/>
            <person name="Mohamoud Y."/>
            <person name="Watkins K."/>
            <person name="Henrissat B."/>
            <person name="Gilbert H.J."/>
            <person name="Nelson K.E."/>
        </authorList>
    </citation>
    <scope>NUCLEOTIDE SEQUENCE [LARGE SCALE GENOMIC DNA]</scope>
    <source>
        <strain>Ueda107</strain>
    </source>
</reference>
<proteinExistence type="inferred from homology"/>
<protein>
    <recommendedName>
        <fullName evidence="1">Large ribosomal subunit protein uL18</fullName>
    </recommendedName>
    <alternativeName>
        <fullName evidence="2">50S ribosomal protein L18</fullName>
    </alternativeName>
</protein>
<organism>
    <name type="scientific">Cellvibrio japonicus (strain Ueda107)</name>
    <name type="common">Pseudomonas fluorescens subsp. cellulosa</name>
    <dbReference type="NCBI Taxonomy" id="498211"/>
    <lineage>
        <taxon>Bacteria</taxon>
        <taxon>Pseudomonadati</taxon>
        <taxon>Pseudomonadota</taxon>
        <taxon>Gammaproteobacteria</taxon>
        <taxon>Cellvibrionales</taxon>
        <taxon>Cellvibrionaceae</taxon>
        <taxon>Cellvibrio</taxon>
    </lineage>
</organism>